<name>NU3C_OENEH</name>
<evidence type="ECO:0000255" key="1">
    <source>
        <dbReference type="HAMAP-Rule" id="MF_01394"/>
    </source>
</evidence>
<organism>
    <name type="scientific">Oenothera elata subsp. hookeri</name>
    <name type="common">Hooker's evening primrose</name>
    <name type="synonym">Oenothera hookeri</name>
    <dbReference type="NCBI Taxonomy" id="85636"/>
    <lineage>
        <taxon>Eukaryota</taxon>
        <taxon>Viridiplantae</taxon>
        <taxon>Streptophyta</taxon>
        <taxon>Embryophyta</taxon>
        <taxon>Tracheophyta</taxon>
        <taxon>Spermatophyta</taxon>
        <taxon>Magnoliopsida</taxon>
        <taxon>eudicotyledons</taxon>
        <taxon>Gunneridae</taxon>
        <taxon>Pentapetalae</taxon>
        <taxon>rosids</taxon>
        <taxon>malvids</taxon>
        <taxon>Myrtales</taxon>
        <taxon>Onagraceae</taxon>
        <taxon>Onagroideae</taxon>
        <taxon>Onagreae</taxon>
        <taxon>Oenothera</taxon>
    </lineage>
</organism>
<geneLocation type="chloroplast"/>
<dbReference type="EC" id="7.1.1.-" evidence="1"/>
<dbReference type="EMBL" id="AJ271079">
    <property type="protein sequence ID" value="CAB67130.1"/>
    <property type="molecule type" value="Genomic_DNA"/>
</dbReference>
<dbReference type="RefSeq" id="NP_084665.1">
    <property type="nucleotide sequence ID" value="NC_002693.2"/>
</dbReference>
<dbReference type="SMR" id="Q9MTP5"/>
<dbReference type="GeneID" id="802776"/>
<dbReference type="GO" id="GO:0009535">
    <property type="term" value="C:chloroplast thylakoid membrane"/>
    <property type="evidence" value="ECO:0007669"/>
    <property type="project" value="UniProtKB-SubCell"/>
</dbReference>
<dbReference type="GO" id="GO:0030964">
    <property type="term" value="C:NADH dehydrogenase complex"/>
    <property type="evidence" value="ECO:0007669"/>
    <property type="project" value="TreeGrafter"/>
</dbReference>
<dbReference type="GO" id="GO:0008137">
    <property type="term" value="F:NADH dehydrogenase (ubiquinone) activity"/>
    <property type="evidence" value="ECO:0007669"/>
    <property type="project" value="InterPro"/>
</dbReference>
<dbReference type="GO" id="GO:0048038">
    <property type="term" value="F:quinone binding"/>
    <property type="evidence" value="ECO:0007669"/>
    <property type="project" value="UniProtKB-KW"/>
</dbReference>
<dbReference type="GO" id="GO:0019684">
    <property type="term" value="P:photosynthesis, light reaction"/>
    <property type="evidence" value="ECO:0007669"/>
    <property type="project" value="UniProtKB-UniRule"/>
</dbReference>
<dbReference type="FunFam" id="1.20.58.1610:FF:000001">
    <property type="entry name" value="NAD(P)H-quinone oxidoreductase subunit 3, chloroplastic"/>
    <property type="match status" value="1"/>
</dbReference>
<dbReference type="Gene3D" id="1.20.58.1610">
    <property type="entry name" value="NADH:ubiquinone/plastoquinone oxidoreductase, chain 3"/>
    <property type="match status" value="1"/>
</dbReference>
<dbReference type="HAMAP" id="MF_01394">
    <property type="entry name" value="NDH1_NuoA"/>
    <property type="match status" value="1"/>
</dbReference>
<dbReference type="InterPro" id="IPR023043">
    <property type="entry name" value="NAD(P)H_OxRDtase_bac/plastid"/>
</dbReference>
<dbReference type="InterPro" id="IPR000440">
    <property type="entry name" value="NADH_UbQ/plastoQ_OxRdtase_su3"/>
</dbReference>
<dbReference type="InterPro" id="IPR038430">
    <property type="entry name" value="NDAH_ubi_oxred_su3_sf"/>
</dbReference>
<dbReference type="PANTHER" id="PTHR11058">
    <property type="entry name" value="NADH-UBIQUINONE OXIDOREDUCTASE CHAIN 3"/>
    <property type="match status" value="1"/>
</dbReference>
<dbReference type="PANTHER" id="PTHR11058:SF9">
    <property type="entry name" value="NADH-UBIQUINONE OXIDOREDUCTASE CHAIN 3"/>
    <property type="match status" value="1"/>
</dbReference>
<dbReference type="Pfam" id="PF00507">
    <property type="entry name" value="Oxidored_q4"/>
    <property type="match status" value="1"/>
</dbReference>
<protein>
    <recommendedName>
        <fullName evidence="1">NAD(P)H-quinone oxidoreductase subunit 3, chloroplastic</fullName>
        <ecNumber evidence="1">7.1.1.-</ecNumber>
    </recommendedName>
    <alternativeName>
        <fullName evidence="1">NAD(P)H dehydrogenase subunit 3</fullName>
    </alternativeName>
    <alternativeName>
        <fullName evidence="1">NADH-plastoquinone oxidoreductase subunit 3</fullName>
    </alternativeName>
</protein>
<accession>Q9MTP5</accession>
<proteinExistence type="inferred from homology"/>
<keyword id="KW-0150">Chloroplast</keyword>
<keyword id="KW-0472">Membrane</keyword>
<keyword id="KW-0520">NAD</keyword>
<keyword id="KW-0521">NADP</keyword>
<keyword id="KW-0934">Plastid</keyword>
<keyword id="KW-0618">Plastoquinone</keyword>
<keyword id="KW-0874">Quinone</keyword>
<keyword id="KW-0793">Thylakoid</keyword>
<keyword id="KW-1278">Translocase</keyword>
<keyword id="KW-0812">Transmembrane</keyword>
<keyword id="KW-1133">Transmembrane helix</keyword>
<keyword id="KW-0813">Transport</keyword>
<reference key="1">
    <citation type="journal article" date="2000" name="Mol. Gen. Genet.">
        <title>Complete nucleotide sequence of the Oenothera elata plastid chromosome, representing plastome I of the five distinguishable Euoenothera plastomes.</title>
        <authorList>
            <person name="Hupfer H."/>
            <person name="Swiatek M."/>
            <person name="Hornung S."/>
            <person name="Herrmann R.G."/>
            <person name="Maier R.M."/>
            <person name="Chiu W.-L."/>
            <person name="Sears B."/>
        </authorList>
    </citation>
    <scope>NUCLEOTIDE SEQUENCE [LARGE SCALE GENOMIC DNA]</scope>
    <source>
        <strain>cv. Johansen</strain>
    </source>
</reference>
<gene>
    <name evidence="1" type="primary">ndhC</name>
</gene>
<feature type="chain" id="PRO_0000117851" description="NAD(P)H-quinone oxidoreductase subunit 3, chloroplastic">
    <location>
        <begin position="1"/>
        <end position="120"/>
    </location>
</feature>
<feature type="transmembrane region" description="Helical" evidence="1">
    <location>
        <begin position="2"/>
        <end position="22"/>
    </location>
</feature>
<feature type="transmembrane region" description="Helical" evidence="1">
    <location>
        <begin position="64"/>
        <end position="84"/>
    </location>
</feature>
<feature type="transmembrane region" description="Helical" evidence="1">
    <location>
        <begin position="88"/>
        <end position="108"/>
    </location>
</feature>
<comment type="function">
    <text evidence="1">NDH shuttles electrons from NAD(P)H:plastoquinone, via FMN and iron-sulfur (Fe-S) centers, to quinones in the photosynthetic chain and possibly in a chloroplast respiratory chain. The immediate electron acceptor for the enzyme in this species is believed to be plastoquinone. Couples the redox reaction to proton translocation, and thus conserves the redox energy in a proton gradient.</text>
</comment>
<comment type="catalytic activity">
    <reaction evidence="1">
        <text>a plastoquinone + NADH + (n+1) H(+)(in) = a plastoquinol + NAD(+) + n H(+)(out)</text>
        <dbReference type="Rhea" id="RHEA:42608"/>
        <dbReference type="Rhea" id="RHEA-COMP:9561"/>
        <dbReference type="Rhea" id="RHEA-COMP:9562"/>
        <dbReference type="ChEBI" id="CHEBI:15378"/>
        <dbReference type="ChEBI" id="CHEBI:17757"/>
        <dbReference type="ChEBI" id="CHEBI:57540"/>
        <dbReference type="ChEBI" id="CHEBI:57945"/>
        <dbReference type="ChEBI" id="CHEBI:62192"/>
    </reaction>
</comment>
<comment type="catalytic activity">
    <reaction evidence="1">
        <text>a plastoquinone + NADPH + (n+1) H(+)(in) = a plastoquinol + NADP(+) + n H(+)(out)</text>
        <dbReference type="Rhea" id="RHEA:42612"/>
        <dbReference type="Rhea" id="RHEA-COMP:9561"/>
        <dbReference type="Rhea" id="RHEA-COMP:9562"/>
        <dbReference type="ChEBI" id="CHEBI:15378"/>
        <dbReference type="ChEBI" id="CHEBI:17757"/>
        <dbReference type="ChEBI" id="CHEBI:57783"/>
        <dbReference type="ChEBI" id="CHEBI:58349"/>
        <dbReference type="ChEBI" id="CHEBI:62192"/>
    </reaction>
</comment>
<comment type="subunit">
    <text evidence="1">NDH is composed of at least 16 different subunits, 5 of which are encoded in the nucleus.</text>
</comment>
<comment type="subcellular location">
    <subcellularLocation>
        <location evidence="1">Plastid</location>
        <location evidence="1">Chloroplast thylakoid membrane</location>
        <topology evidence="1">Multi-pass membrane protein</topology>
    </subcellularLocation>
</comment>
<comment type="similarity">
    <text evidence="1">Belongs to the complex I subunit 3 family.</text>
</comment>
<sequence length="120" mass="13834">MFLLYEYDIFWAFLIISSVIPILAFRISGLLAPTSIGPEKLSSYESGIEPMGDAWLQFRIRYYMFALVFVVFDVETIFLYPWALSFDILGVSVFIEALIFVLILVLGLVYAWRKGALEWS</sequence>